<organism>
    <name type="scientific">Vitis vinifera</name>
    <name type="common">Grape</name>
    <dbReference type="NCBI Taxonomy" id="29760"/>
    <lineage>
        <taxon>Eukaryota</taxon>
        <taxon>Viridiplantae</taxon>
        <taxon>Streptophyta</taxon>
        <taxon>Embryophyta</taxon>
        <taxon>Tracheophyta</taxon>
        <taxon>Spermatophyta</taxon>
        <taxon>Magnoliopsida</taxon>
        <taxon>eudicotyledons</taxon>
        <taxon>Gunneridae</taxon>
        <taxon>Pentapetalae</taxon>
        <taxon>rosids</taxon>
        <taxon>Vitales</taxon>
        <taxon>Vitaceae</taxon>
        <taxon>Viteae</taxon>
        <taxon>Vitis</taxon>
    </lineage>
</organism>
<gene>
    <name type="primary">CHS</name>
</gene>
<keyword id="KW-0012">Acyltransferase</keyword>
<keyword id="KW-0284">Flavonoid biosynthesis</keyword>
<keyword id="KW-0808">Transferase</keyword>
<sequence>MVSVAEIRKAQRAEGPATVLAIGTATPANCVYQADYPDYYFRITNSEHMTELKEKFKRMCEKSMINKRYMHLTEEILKENPNVCAYMAPSLDARQDMVVVEVPKLGKEAAAKAIKEWGQPKSKITHLVFCTTSGVDMPGADYQLTKLLGLKPSVKRLMMYQQGCFAGGTVLRLAKDLAENNAGSRVLVVCSEITAVTFRGPSDTHLDSLVGQALFGDGAAAVIIGADPDTKIELPLFELVSAAQTILPDSEGAIDGHLREVGLTFHLLKDVPGLISKNIEKSLVEAFTPIGISDWNSLFWIAHPGGPAILDQVELKLGLKEEKLRATRHVLSEYGNMSSACVLFILDEMRKKSIEEGKGSTGEGLEWGVLFGFGPGLTVETVVLHSVSAPAAH</sequence>
<protein>
    <recommendedName>
        <fullName>Chalcone synthase</fullName>
        <ecNumber>2.3.1.74</ecNumber>
    </recommendedName>
    <alternativeName>
        <fullName>Naringenin-chalcone synthase</fullName>
    </alternativeName>
</protein>
<reference key="1">
    <citation type="journal article" date="1994" name="Plant Mol. Biol.">
        <title>Cloning and molecular analysis of structural genes involved in flavonoid and stilbene biosynthesis in grape (Vitis vinifera L.).</title>
        <authorList>
            <person name="Sparvoli F."/>
            <person name="Martin C."/>
            <person name="Scienza A."/>
            <person name="Gavazzi G."/>
            <person name="Tonelli C."/>
        </authorList>
    </citation>
    <scope>NUCLEOTIDE SEQUENCE [MRNA]</scope>
    <source>
        <strain>cv. Lambrusco Foglia Frastagliata</strain>
    </source>
</reference>
<feature type="chain" id="PRO_0000216075" description="Chalcone synthase">
    <location>
        <begin position="1"/>
        <end position="393"/>
    </location>
</feature>
<feature type="active site" evidence="1">
    <location>
        <position position="164"/>
    </location>
</feature>
<evidence type="ECO:0000255" key="1">
    <source>
        <dbReference type="PROSITE-ProRule" id="PRU10023"/>
    </source>
</evidence>
<evidence type="ECO:0000305" key="2"/>
<accession>P51090</accession>
<name>CHSY_VITVI</name>
<dbReference type="EC" id="2.3.1.74"/>
<dbReference type="EMBL" id="X75969">
    <property type="protein sequence ID" value="CAA53583.1"/>
    <property type="molecule type" value="mRNA"/>
</dbReference>
<dbReference type="SMR" id="P51090"/>
<dbReference type="PaxDb" id="29760-VIT_14s0068g00930.t01"/>
<dbReference type="eggNOG" id="ENOG502QRSY">
    <property type="taxonomic scope" value="Eukaryota"/>
</dbReference>
<dbReference type="UniPathway" id="UPA00154"/>
<dbReference type="ExpressionAtlas" id="P51090">
    <property type="expression patterns" value="baseline and differential"/>
</dbReference>
<dbReference type="GO" id="GO:0016210">
    <property type="term" value="F:naringenin-chalcone synthase activity"/>
    <property type="evidence" value="ECO:0007669"/>
    <property type="project" value="UniProtKB-EC"/>
</dbReference>
<dbReference type="GO" id="GO:0009813">
    <property type="term" value="P:flavonoid biosynthetic process"/>
    <property type="evidence" value="ECO:0007669"/>
    <property type="project" value="UniProtKB-UniPathway"/>
</dbReference>
<dbReference type="CDD" id="cd00831">
    <property type="entry name" value="CHS_like"/>
    <property type="match status" value="1"/>
</dbReference>
<dbReference type="FunFam" id="3.40.47.10:FF:000014">
    <property type="entry name" value="Chalcone synthase 1"/>
    <property type="match status" value="1"/>
</dbReference>
<dbReference type="FunFam" id="3.40.47.10:FF:000025">
    <property type="entry name" value="Chalcone synthase 2"/>
    <property type="match status" value="1"/>
</dbReference>
<dbReference type="Gene3D" id="3.40.47.10">
    <property type="match status" value="2"/>
</dbReference>
<dbReference type="InterPro" id="IPR012328">
    <property type="entry name" value="Chalcone/stilbene_synt_C"/>
</dbReference>
<dbReference type="InterPro" id="IPR001099">
    <property type="entry name" value="Chalcone/stilbene_synt_N"/>
</dbReference>
<dbReference type="InterPro" id="IPR018088">
    <property type="entry name" value="Chalcone/stilbene_synthase_AS"/>
</dbReference>
<dbReference type="InterPro" id="IPR011141">
    <property type="entry name" value="Polyketide_synthase_type-III"/>
</dbReference>
<dbReference type="InterPro" id="IPR016039">
    <property type="entry name" value="Thiolase-like"/>
</dbReference>
<dbReference type="PANTHER" id="PTHR11877:SF14">
    <property type="entry name" value="CHALCONE SYNTHASE"/>
    <property type="match status" value="1"/>
</dbReference>
<dbReference type="PANTHER" id="PTHR11877">
    <property type="entry name" value="HYDROXYMETHYLGLUTARYL-COA SYNTHASE"/>
    <property type="match status" value="1"/>
</dbReference>
<dbReference type="Pfam" id="PF02797">
    <property type="entry name" value="Chal_sti_synt_C"/>
    <property type="match status" value="1"/>
</dbReference>
<dbReference type="Pfam" id="PF00195">
    <property type="entry name" value="Chal_sti_synt_N"/>
    <property type="match status" value="1"/>
</dbReference>
<dbReference type="PIRSF" id="PIRSF000451">
    <property type="entry name" value="PKS_III"/>
    <property type="match status" value="1"/>
</dbReference>
<dbReference type="SUPFAM" id="SSF53901">
    <property type="entry name" value="Thiolase-like"/>
    <property type="match status" value="2"/>
</dbReference>
<dbReference type="PROSITE" id="PS00441">
    <property type="entry name" value="CHALCONE_SYNTH"/>
    <property type="match status" value="1"/>
</dbReference>
<comment type="function">
    <text>The primary product of this enzyme is 4,2',4',6'-tetrahydroxychalcone (also termed naringenin-chalcone or chalcone) which can under specific conditions spontaneously isomerize into naringenin.</text>
</comment>
<comment type="catalytic activity">
    <reaction evidence="1">
        <text>(E)-4-coumaroyl-CoA + 3 malonyl-CoA + 3 H(+) = 2',4,4',6'-tetrahydroxychalcone + 3 CO2 + 4 CoA</text>
        <dbReference type="Rhea" id="RHEA:11128"/>
        <dbReference type="ChEBI" id="CHEBI:15378"/>
        <dbReference type="ChEBI" id="CHEBI:15413"/>
        <dbReference type="ChEBI" id="CHEBI:16526"/>
        <dbReference type="ChEBI" id="CHEBI:57287"/>
        <dbReference type="ChEBI" id="CHEBI:57384"/>
        <dbReference type="ChEBI" id="CHEBI:85008"/>
        <dbReference type="EC" id="2.3.1.74"/>
    </reaction>
</comment>
<comment type="pathway">
    <text>Secondary metabolite biosynthesis; flavonoid biosynthesis.</text>
</comment>
<comment type="induction">
    <text>By light.</text>
</comment>
<comment type="similarity">
    <text evidence="2">Belongs to the thiolase-like superfamily. Chalcone/stilbene synthases family.</text>
</comment>
<proteinExistence type="evidence at transcript level"/>